<name>TTCA_BORBR</name>
<comment type="function">
    <text evidence="1">Catalyzes the ATP-dependent 2-thiolation of cytidine in position 32 of tRNA, to form 2-thiocytidine (s(2)C32). The sulfur atoms are provided by the cysteine/cysteine desulfurase (IscS) system.</text>
</comment>
<comment type="catalytic activity">
    <reaction evidence="1">
        <text>cytidine(32) in tRNA + S-sulfanyl-L-cysteinyl-[cysteine desulfurase] + AH2 + ATP = 2-thiocytidine(32) in tRNA + L-cysteinyl-[cysteine desulfurase] + A + AMP + diphosphate + H(+)</text>
        <dbReference type="Rhea" id="RHEA:57048"/>
        <dbReference type="Rhea" id="RHEA-COMP:10288"/>
        <dbReference type="Rhea" id="RHEA-COMP:12157"/>
        <dbReference type="Rhea" id="RHEA-COMP:12158"/>
        <dbReference type="Rhea" id="RHEA-COMP:14821"/>
        <dbReference type="ChEBI" id="CHEBI:13193"/>
        <dbReference type="ChEBI" id="CHEBI:15378"/>
        <dbReference type="ChEBI" id="CHEBI:17499"/>
        <dbReference type="ChEBI" id="CHEBI:29950"/>
        <dbReference type="ChEBI" id="CHEBI:30616"/>
        <dbReference type="ChEBI" id="CHEBI:33019"/>
        <dbReference type="ChEBI" id="CHEBI:61963"/>
        <dbReference type="ChEBI" id="CHEBI:82748"/>
        <dbReference type="ChEBI" id="CHEBI:141453"/>
        <dbReference type="ChEBI" id="CHEBI:456215"/>
    </reaction>
    <physiologicalReaction direction="left-to-right" evidence="1">
        <dbReference type="Rhea" id="RHEA:57049"/>
    </physiologicalReaction>
</comment>
<comment type="cofactor">
    <cofactor evidence="1">
        <name>Mg(2+)</name>
        <dbReference type="ChEBI" id="CHEBI:18420"/>
    </cofactor>
</comment>
<comment type="cofactor">
    <cofactor evidence="1">
        <name>[4Fe-4S] cluster</name>
        <dbReference type="ChEBI" id="CHEBI:49883"/>
    </cofactor>
    <text evidence="1">Binds 1 [4Fe-4S] cluster per subunit. The cluster is chelated by three Cys residues, the fourth Fe has a free coordination site that may bind a sulfur atom transferred from the persulfide of IscS.</text>
</comment>
<comment type="pathway">
    <text evidence="1">tRNA modification.</text>
</comment>
<comment type="subunit">
    <text evidence="1">Homodimer.</text>
</comment>
<comment type="subcellular location">
    <subcellularLocation>
        <location evidence="1">Cytoplasm</location>
    </subcellularLocation>
</comment>
<comment type="miscellaneous">
    <text evidence="1">The thiolation reaction likely consists of two steps: a first activation step by ATP to form an adenylated intermediate of the target base of tRNA, and a second nucleophilic substitution step of the sulfur (S) atom supplied by the hydrosulfide attached to the Fe-S cluster.</text>
</comment>
<comment type="similarity">
    <text evidence="1">Belongs to the TtcA family.</text>
</comment>
<proteinExistence type="inferred from homology"/>
<dbReference type="EC" id="2.8.1.-" evidence="1"/>
<dbReference type="EMBL" id="BX640451">
    <property type="protein sequence ID" value="CAE34980.1"/>
    <property type="molecule type" value="Genomic_DNA"/>
</dbReference>
<dbReference type="RefSeq" id="WP_003815371.1">
    <property type="nucleotide sequence ID" value="NC_002927.3"/>
</dbReference>
<dbReference type="SMR" id="Q7WEL6"/>
<dbReference type="GeneID" id="56476883"/>
<dbReference type="KEGG" id="bbr:BB4618"/>
<dbReference type="eggNOG" id="COG0037">
    <property type="taxonomic scope" value="Bacteria"/>
</dbReference>
<dbReference type="HOGENOM" id="CLU_026481_0_0_4"/>
<dbReference type="Proteomes" id="UP000001027">
    <property type="component" value="Chromosome"/>
</dbReference>
<dbReference type="GO" id="GO:0005737">
    <property type="term" value="C:cytoplasm"/>
    <property type="evidence" value="ECO:0007669"/>
    <property type="project" value="UniProtKB-SubCell"/>
</dbReference>
<dbReference type="GO" id="GO:0051539">
    <property type="term" value="F:4 iron, 4 sulfur cluster binding"/>
    <property type="evidence" value="ECO:0007669"/>
    <property type="project" value="UniProtKB-UniRule"/>
</dbReference>
<dbReference type="GO" id="GO:0005524">
    <property type="term" value="F:ATP binding"/>
    <property type="evidence" value="ECO:0007669"/>
    <property type="project" value="UniProtKB-UniRule"/>
</dbReference>
<dbReference type="GO" id="GO:0000287">
    <property type="term" value="F:magnesium ion binding"/>
    <property type="evidence" value="ECO:0007669"/>
    <property type="project" value="UniProtKB-UniRule"/>
</dbReference>
<dbReference type="GO" id="GO:0016783">
    <property type="term" value="F:sulfurtransferase activity"/>
    <property type="evidence" value="ECO:0007669"/>
    <property type="project" value="UniProtKB-UniRule"/>
</dbReference>
<dbReference type="GO" id="GO:0000049">
    <property type="term" value="F:tRNA binding"/>
    <property type="evidence" value="ECO:0007669"/>
    <property type="project" value="UniProtKB-KW"/>
</dbReference>
<dbReference type="GO" id="GO:0034227">
    <property type="term" value="P:tRNA thio-modification"/>
    <property type="evidence" value="ECO:0007669"/>
    <property type="project" value="UniProtKB-UniRule"/>
</dbReference>
<dbReference type="CDD" id="cd24138">
    <property type="entry name" value="TtcA-like"/>
    <property type="match status" value="1"/>
</dbReference>
<dbReference type="Gene3D" id="3.40.50.620">
    <property type="entry name" value="HUPs"/>
    <property type="match status" value="1"/>
</dbReference>
<dbReference type="HAMAP" id="MF_01850">
    <property type="entry name" value="TtcA"/>
    <property type="match status" value="1"/>
</dbReference>
<dbReference type="InterPro" id="IPR014729">
    <property type="entry name" value="Rossmann-like_a/b/a_fold"/>
</dbReference>
<dbReference type="InterPro" id="IPR011063">
    <property type="entry name" value="TilS/TtcA_N"/>
</dbReference>
<dbReference type="InterPro" id="IPR012089">
    <property type="entry name" value="tRNA_Cyd_32_2_STrfase"/>
</dbReference>
<dbReference type="NCBIfam" id="NF007972">
    <property type="entry name" value="PRK10696.1"/>
    <property type="match status" value="1"/>
</dbReference>
<dbReference type="PANTHER" id="PTHR43686:SF1">
    <property type="entry name" value="AMINOTRAN_5 DOMAIN-CONTAINING PROTEIN"/>
    <property type="match status" value="1"/>
</dbReference>
<dbReference type="PANTHER" id="PTHR43686">
    <property type="entry name" value="SULFURTRANSFERASE-RELATED"/>
    <property type="match status" value="1"/>
</dbReference>
<dbReference type="Pfam" id="PF01171">
    <property type="entry name" value="ATP_bind_3"/>
    <property type="match status" value="1"/>
</dbReference>
<dbReference type="SUPFAM" id="SSF52402">
    <property type="entry name" value="Adenine nucleotide alpha hydrolases-like"/>
    <property type="match status" value="1"/>
</dbReference>
<feature type="chain" id="PRO_0000348668" description="tRNA-cytidine(32) 2-sulfurtransferase">
    <location>
        <begin position="1"/>
        <end position="320"/>
    </location>
</feature>
<feature type="short sequence motif" description="PP-loop motif" evidence="1">
    <location>
        <begin position="54"/>
        <end position="59"/>
    </location>
</feature>
<feature type="binding site" evidence="1">
    <location>
        <position position="129"/>
    </location>
    <ligand>
        <name>[4Fe-4S] cluster</name>
        <dbReference type="ChEBI" id="CHEBI:49883"/>
    </ligand>
</feature>
<feature type="binding site" evidence="1">
    <location>
        <position position="132"/>
    </location>
    <ligand>
        <name>[4Fe-4S] cluster</name>
        <dbReference type="ChEBI" id="CHEBI:49883"/>
    </ligand>
</feature>
<feature type="binding site" evidence="1">
    <location>
        <position position="220"/>
    </location>
    <ligand>
        <name>[4Fe-4S] cluster</name>
        <dbReference type="ChEBI" id="CHEBI:49883"/>
    </ligand>
</feature>
<organism>
    <name type="scientific">Bordetella bronchiseptica (strain ATCC BAA-588 / NCTC 13252 / RB50)</name>
    <name type="common">Alcaligenes bronchisepticus</name>
    <dbReference type="NCBI Taxonomy" id="257310"/>
    <lineage>
        <taxon>Bacteria</taxon>
        <taxon>Pseudomonadati</taxon>
        <taxon>Pseudomonadota</taxon>
        <taxon>Betaproteobacteria</taxon>
        <taxon>Burkholderiales</taxon>
        <taxon>Alcaligenaceae</taxon>
        <taxon>Bordetella</taxon>
    </lineage>
</organism>
<reference key="1">
    <citation type="journal article" date="2003" name="Nat. Genet.">
        <title>Comparative analysis of the genome sequences of Bordetella pertussis, Bordetella parapertussis and Bordetella bronchiseptica.</title>
        <authorList>
            <person name="Parkhill J."/>
            <person name="Sebaihia M."/>
            <person name="Preston A."/>
            <person name="Murphy L.D."/>
            <person name="Thomson N.R."/>
            <person name="Harris D.E."/>
            <person name="Holden M.T.G."/>
            <person name="Churcher C.M."/>
            <person name="Bentley S.D."/>
            <person name="Mungall K.L."/>
            <person name="Cerdeno-Tarraga A.-M."/>
            <person name="Temple L."/>
            <person name="James K.D."/>
            <person name="Harris B."/>
            <person name="Quail M.A."/>
            <person name="Achtman M."/>
            <person name="Atkin R."/>
            <person name="Baker S."/>
            <person name="Basham D."/>
            <person name="Bason N."/>
            <person name="Cherevach I."/>
            <person name="Chillingworth T."/>
            <person name="Collins M."/>
            <person name="Cronin A."/>
            <person name="Davis P."/>
            <person name="Doggett J."/>
            <person name="Feltwell T."/>
            <person name="Goble A."/>
            <person name="Hamlin N."/>
            <person name="Hauser H."/>
            <person name="Holroyd S."/>
            <person name="Jagels K."/>
            <person name="Leather S."/>
            <person name="Moule S."/>
            <person name="Norberczak H."/>
            <person name="O'Neil S."/>
            <person name="Ormond D."/>
            <person name="Price C."/>
            <person name="Rabbinowitsch E."/>
            <person name="Rutter S."/>
            <person name="Sanders M."/>
            <person name="Saunders D."/>
            <person name="Seeger K."/>
            <person name="Sharp S."/>
            <person name="Simmonds M."/>
            <person name="Skelton J."/>
            <person name="Squares R."/>
            <person name="Squares S."/>
            <person name="Stevens K."/>
            <person name="Unwin L."/>
            <person name="Whitehead S."/>
            <person name="Barrell B.G."/>
            <person name="Maskell D.J."/>
        </authorList>
    </citation>
    <scope>NUCLEOTIDE SEQUENCE [LARGE SCALE GENOMIC DNA]</scope>
    <source>
        <strain>ATCC BAA-588 / NCTC 13252 / RB50</strain>
    </source>
</reference>
<evidence type="ECO:0000255" key="1">
    <source>
        <dbReference type="HAMAP-Rule" id="MF_01850"/>
    </source>
</evidence>
<sequence length="320" mass="35235">MTLTASPTAARTPAEEKARFEGNKLAKRLARETTRAIADYNMIEAGDKVMVCLSGGKDSYALLDILLSLQKRAPFAFEIIAVNLDQKQPGFPPEILPDYLRALGVPFHIETQDTYSIVTRVIPEGKTMCSLCSRLRRGILYRVASELGATKIALGHHRDDILGTFFLNLFYGGKAKGMPPKLVSDDGRHTVIRPLAYVPESDLIAYAQFKQFPIIPCNLCGSQENLKRKEVGRMIQEWDRKHPGRSWNVFNALSRVVPSHLMDRDLFDFVGLKPTGVADAGGDTAFDQIDPEPDTAGPGCASDAPAGQADGMAEQRVVFR</sequence>
<accession>Q7WEL6</accession>
<gene>
    <name evidence="1" type="primary">ttcA</name>
    <name type="ordered locus">BB4618</name>
</gene>
<protein>
    <recommendedName>
        <fullName evidence="1">tRNA-cytidine(32) 2-sulfurtransferase</fullName>
        <ecNumber evidence="1">2.8.1.-</ecNumber>
    </recommendedName>
    <alternativeName>
        <fullName evidence="1">Two-thiocytidine biosynthesis protein A</fullName>
    </alternativeName>
    <alternativeName>
        <fullName evidence="1">tRNA 2-thiocytidine biosynthesis protein TtcA</fullName>
    </alternativeName>
</protein>
<keyword id="KW-0004">4Fe-4S</keyword>
<keyword id="KW-0067">ATP-binding</keyword>
<keyword id="KW-0963">Cytoplasm</keyword>
<keyword id="KW-0408">Iron</keyword>
<keyword id="KW-0411">Iron-sulfur</keyword>
<keyword id="KW-0460">Magnesium</keyword>
<keyword id="KW-0479">Metal-binding</keyword>
<keyword id="KW-0547">Nucleotide-binding</keyword>
<keyword id="KW-0694">RNA-binding</keyword>
<keyword id="KW-0808">Transferase</keyword>
<keyword id="KW-0819">tRNA processing</keyword>
<keyword id="KW-0820">tRNA-binding</keyword>